<organism>
    <name type="scientific">Methylobacillus flagellatus (strain ATCC 51484 / DSM 6875 / VKM B-1610 / KT)</name>
    <dbReference type="NCBI Taxonomy" id="265072"/>
    <lineage>
        <taxon>Bacteria</taxon>
        <taxon>Pseudomonadati</taxon>
        <taxon>Pseudomonadota</taxon>
        <taxon>Betaproteobacteria</taxon>
        <taxon>Nitrosomonadales</taxon>
        <taxon>Methylophilaceae</taxon>
        <taxon>Methylobacillus</taxon>
    </lineage>
</organism>
<keyword id="KW-0004">4Fe-4S</keyword>
<keyword id="KW-0963">Cytoplasm</keyword>
<keyword id="KW-0408">Iron</keyword>
<keyword id="KW-0411">Iron-sulfur</keyword>
<keyword id="KW-0479">Metal-binding</keyword>
<keyword id="KW-1185">Reference proteome</keyword>
<keyword id="KW-0949">S-adenosyl-L-methionine</keyword>
<keyword id="KW-0808">Transferase</keyword>
<feature type="chain" id="PRO_0000374890" description="Ribosomal protein uS12 methylthiotransferase RimO">
    <location>
        <begin position="1"/>
        <end position="441"/>
    </location>
</feature>
<feature type="domain" description="MTTase N-terminal" evidence="1">
    <location>
        <begin position="6"/>
        <end position="116"/>
    </location>
</feature>
<feature type="domain" description="Radical SAM core" evidence="2">
    <location>
        <begin position="133"/>
        <end position="370"/>
    </location>
</feature>
<feature type="domain" description="TRAM" evidence="1">
    <location>
        <begin position="373"/>
        <end position="439"/>
    </location>
</feature>
<feature type="binding site" evidence="1">
    <location>
        <position position="15"/>
    </location>
    <ligand>
        <name>[4Fe-4S] cluster</name>
        <dbReference type="ChEBI" id="CHEBI:49883"/>
        <label>1</label>
    </ligand>
</feature>
<feature type="binding site" evidence="1">
    <location>
        <position position="51"/>
    </location>
    <ligand>
        <name>[4Fe-4S] cluster</name>
        <dbReference type="ChEBI" id="CHEBI:49883"/>
        <label>1</label>
    </ligand>
</feature>
<feature type="binding site" evidence="1">
    <location>
        <position position="80"/>
    </location>
    <ligand>
        <name>[4Fe-4S] cluster</name>
        <dbReference type="ChEBI" id="CHEBI:49883"/>
        <label>1</label>
    </ligand>
</feature>
<feature type="binding site" evidence="1">
    <location>
        <position position="147"/>
    </location>
    <ligand>
        <name>[4Fe-4S] cluster</name>
        <dbReference type="ChEBI" id="CHEBI:49883"/>
        <label>2</label>
        <note>4Fe-4S-S-AdoMet</note>
    </ligand>
</feature>
<feature type="binding site" evidence="1">
    <location>
        <position position="151"/>
    </location>
    <ligand>
        <name>[4Fe-4S] cluster</name>
        <dbReference type="ChEBI" id="CHEBI:49883"/>
        <label>2</label>
        <note>4Fe-4S-S-AdoMet</note>
    </ligand>
</feature>
<feature type="binding site" evidence="1">
    <location>
        <position position="154"/>
    </location>
    <ligand>
        <name>[4Fe-4S] cluster</name>
        <dbReference type="ChEBI" id="CHEBI:49883"/>
        <label>2</label>
        <note>4Fe-4S-S-AdoMet</note>
    </ligand>
</feature>
<sequence>MSLQSPKVGFVSLGCPKASSDSERILTQLRAEGYAISGSYDDADLVVVNTCGFIDSAVEESLDAIGEALAENGKVIVTGCLGAKSDVVKAAHPGVLAVTGPHALEEVMTAVHANLPKLHDPYTDLVPPQGIRLTPQHYAYLKISEGCNHRCSFCIIPSMRGDLVSRSIGDVMTEAENLVNAGVAELLVISQDTSAYGVDVKYRTGFWNGRPVKTRMTELARALGSLGVWVRMHYVYPYPHVDEIIPLMADGLILPYLDVPLQHASPRILKAMKRPASSENNLARINAWREICPDITIRSTFIVGFPGETDEDFECLLEFLQEAQLDRVGCFAYSAVDGAAANALDNPVPEPLKQERLARFMEVQESISAEKQRRKIGRIETVLIDDIDGDQAIGRTAADAPEIDGVVYLSGADGLQPGDLVEAQIVNSDGHDLWAAPPARD</sequence>
<gene>
    <name evidence="1" type="primary">rimO</name>
    <name type="ordered locus">Mfla_1596</name>
</gene>
<accession>Q1H0X3</accession>
<name>RIMO_METFK</name>
<comment type="function">
    <text evidence="1">Catalyzes the methylthiolation of an aspartic acid residue of ribosomal protein uS12.</text>
</comment>
<comment type="catalytic activity">
    <reaction evidence="1">
        <text>L-aspartate(89)-[ribosomal protein uS12]-hydrogen + (sulfur carrier)-SH + AH2 + 2 S-adenosyl-L-methionine = 3-methylsulfanyl-L-aspartate(89)-[ribosomal protein uS12]-hydrogen + (sulfur carrier)-H + 5'-deoxyadenosine + L-methionine + A + S-adenosyl-L-homocysteine + 2 H(+)</text>
        <dbReference type="Rhea" id="RHEA:37087"/>
        <dbReference type="Rhea" id="RHEA-COMP:10460"/>
        <dbReference type="Rhea" id="RHEA-COMP:10461"/>
        <dbReference type="Rhea" id="RHEA-COMP:14737"/>
        <dbReference type="Rhea" id="RHEA-COMP:14739"/>
        <dbReference type="ChEBI" id="CHEBI:13193"/>
        <dbReference type="ChEBI" id="CHEBI:15378"/>
        <dbReference type="ChEBI" id="CHEBI:17319"/>
        <dbReference type="ChEBI" id="CHEBI:17499"/>
        <dbReference type="ChEBI" id="CHEBI:29917"/>
        <dbReference type="ChEBI" id="CHEBI:29961"/>
        <dbReference type="ChEBI" id="CHEBI:57844"/>
        <dbReference type="ChEBI" id="CHEBI:57856"/>
        <dbReference type="ChEBI" id="CHEBI:59789"/>
        <dbReference type="ChEBI" id="CHEBI:64428"/>
        <dbReference type="ChEBI" id="CHEBI:73599"/>
        <dbReference type="EC" id="2.8.4.4"/>
    </reaction>
</comment>
<comment type="cofactor">
    <cofactor evidence="1">
        <name>[4Fe-4S] cluster</name>
        <dbReference type="ChEBI" id="CHEBI:49883"/>
    </cofactor>
    <text evidence="1">Binds 2 [4Fe-4S] clusters. One cluster is coordinated with 3 cysteines and an exchangeable S-adenosyl-L-methionine.</text>
</comment>
<comment type="subcellular location">
    <subcellularLocation>
        <location evidence="1">Cytoplasm</location>
    </subcellularLocation>
</comment>
<comment type="similarity">
    <text evidence="1">Belongs to the methylthiotransferase family. RimO subfamily.</text>
</comment>
<reference key="1">
    <citation type="submission" date="2006-03" db="EMBL/GenBank/DDBJ databases">
        <title>Complete sequence of Methylobacillus flagellatus KT.</title>
        <authorList>
            <consortium name="US DOE Joint Genome Institute"/>
            <person name="Copeland A."/>
            <person name="Lucas S."/>
            <person name="Lapidus A."/>
            <person name="Barry K."/>
            <person name="Detter J.C."/>
            <person name="Glavina del Rio T."/>
            <person name="Hammon N."/>
            <person name="Israni S."/>
            <person name="Dalin E."/>
            <person name="Tice H."/>
            <person name="Pitluck S."/>
            <person name="Brettin T."/>
            <person name="Bruce D."/>
            <person name="Han C."/>
            <person name="Tapia R."/>
            <person name="Saunders E."/>
            <person name="Gilna P."/>
            <person name="Schmutz J."/>
            <person name="Larimer F."/>
            <person name="Land M."/>
            <person name="Kyrpides N."/>
            <person name="Anderson I."/>
            <person name="Richardson P."/>
        </authorList>
    </citation>
    <scope>NUCLEOTIDE SEQUENCE [LARGE SCALE GENOMIC DNA]</scope>
    <source>
        <strain>ATCC 51484 / DSM 6875 / VKM B-1610 / KT</strain>
    </source>
</reference>
<evidence type="ECO:0000255" key="1">
    <source>
        <dbReference type="HAMAP-Rule" id="MF_01865"/>
    </source>
</evidence>
<evidence type="ECO:0000255" key="2">
    <source>
        <dbReference type="PROSITE-ProRule" id="PRU01266"/>
    </source>
</evidence>
<protein>
    <recommendedName>
        <fullName evidence="1">Ribosomal protein uS12 methylthiotransferase RimO</fullName>
        <shortName evidence="1">uS12 MTTase</shortName>
        <shortName evidence="1">uS12 methylthiotransferase</shortName>
        <ecNumber evidence="1">2.8.4.4</ecNumber>
    </recommendedName>
    <alternativeName>
        <fullName evidence="1">Ribosomal protein uS12 (aspartate-C(3))-methylthiotransferase</fullName>
    </alternativeName>
    <alternativeName>
        <fullName evidence="1">Ribosome maturation factor RimO</fullName>
    </alternativeName>
</protein>
<proteinExistence type="inferred from homology"/>
<dbReference type="EC" id="2.8.4.4" evidence="1"/>
<dbReference type="EMBL" id="CP000284">
    <property type="protein sequence ID" value="ABE49864.1"/>
    <property type="molecule type" value="Genomic_DNA"/>
</dbReference>
<dbReference type="RefSeq" id="WP_011479818.1">
    <property type="nucleotide sequence ID" value="NC_007947.1"/>
</dbReference>
<dbReference type="SMR" id="Q1H0X3"/>
<dbReference type="STRING" id="265072.Mfla_1596"/>
<dbReference type="KEGG" id="mfa:Mfla_1596"/>
<dbReference type="eggNOG" id="COG0621">
    <property type="taxonomic scope" value="Bacteria"/>
</dbReference>
<dbReference type="HOGENOM" id="CLU_018697_0_0_4"/>
<dbReference type="OrthoDB" id="9805215at2"/>
<dbReference type="Proteomes" id="UP000002440">
    <property type="component" value="Chromosome"/>
</dbReference>
<dbReference type="GO" id="GO:0005829">
    <property type="term" value="C:cytosol"/>
    <property type="evidence" value="ECO:0007669"/>
    <property type="project" value="TreeGrafter"/>
</dbReference>
<dbReference type="GO" id="GO:0051539">
    <property type="term" value="F:4 iron, 4 sulfur cluster binding"/>
    <property type="evidence" value="ECO:0007669"/>
    <property type="project" value="UniProtKB-UniRule"/>
</dbReference>
<dbReference type="GO" id="GO:0035599">
    <property type="term" value="F:aspartic acid methylthiotransferase activity"/>
    <property type="evidence" value="ECO:0007669"/>
    <property type="project" value="TreeGrafter"/>
</dbReference>
<dbReference type="GO" id="GO:0046872">
    <property type="term" value="F:metal ion binding"/>
    <property type="evidence" value="ECO:0007669"/>
    <property type="project" value="UniProtKB-KW"/>
</dbReference>
<dbReference type="GO" id="GO:0103039">
    <property type="term" value="F:protein methylthiotransferase activity"/>
    <property type="evidence" value="ECO:0007669"/>
    <property type="project" value="UniProtKB-EC"/>
</dbReference>
<dbReference type="GO" id="GO:0006400">
    <property type="term" value="P:tRNA modification"/>
    <property type="evidence" value="ECO:0007669"/>
    <property type="project" value="InterPro"/>
</dbReference>
<dbReference type="CDD" id="cd01335">
    <property type="entry name" value="Radical_SAM"/>
    <property type="match status" value="1"/>
</dbReference>
<dbReference type="FunFam" id="3.40.50.12160:FF:000002">
    <property type="entry name" value="Ribosomal protein S12 methylthiotransferase RimO"/>
    <property type="match status" value="1"/>
</dbReference>
<dbReference type="FunFam" id="3.80.30.20:FF:000001">
    <property type="entry name" value="tRNA-2-methylthio-N(6)-dimethylallyladenosine synthase 2"/>
    <property type="match status" value="1"/>
</dbReference>
<dbReference type="Gene3D" id="3.40.50.12160">
    <property type="entry name" value="Methylthiotransferase, N-terminal domain"/>
    <property type="match status" value="1"/>
</dbReference>
<dbReference type="Gene3D" id="2.40.50.140">
    <property type="entry name" value="Nucleic acid-binding proteins"/>
    <property type="match status" value="1"/>
</dbReference>
<dbReference type="Gene3D" id="3.80.30.20">
    <property type="entry name" value="tm_1862 like domain"/>
    <property type="match status" value="1"/>
</dbReference>
<dbReference type="HAMAP" id="MF_01865">
    <property type="entry name" value="MTTase_RimO"/>
    <property type="match status" value="1"/>
</dbReference>
<dbReference type="InterPro" id="IPR006638">
    <property type="entry name" value="Elp3/MiaA/NifB-like_rSAM"/>
</dbReference>
<dbReference type="InterPro" id="IPR005839">
    <property type="entry name" value="Methylthiotransferase"/>
</dbReference>
<dbReference type="InterPro" id="IPR020612">
    <property type="entry name" value="Methylthiotransferase_CS"/>
</dbReference>
<dbReference type="InterPro" id="IPR013848">
    <property type="entry name" value="Methylthiotransferase_N"/>
</dbReference>
<dbReference type="InterPro" id="IPR038135">
    <property type="entry name" value="Methylthiotransferase_N_sf"/>
</dbReference>
<dbReference type="InterPro" id="IPR012340">
    <property type="entry name" value="NA-bd_OB-fold"/>
</dbReference>
<dbReference type="InterPro" id="IPR005840">
    <property type="entry name" value="Ribosomal_uS12_MeSTrfase_RimO"/>
</dbReference>
<dbReference type="InterPro" id="IPR007197">
    <property type="entry name" value="rSAM"/>
</dbReference>
<dbReference type="InterPro" id="IPR023404">
    <property type="entry name" value="rSAM_horseshoe"/>
</dbReference>
<dbReference type="InterPro" id="IPR002792">
    <property type="entry name" value="TRAM_dom"/>
</dbReference>
<dbReference type="NCBIfam" id="TIGR01125">
    <property type="entry name" value="30S ribosomal protein S12 methylthiotransferase RimO"/>
    <property type="match status" value="1"/>
</dbReference>
<dbReference type="NCBIfam" id="TIGR00089">
    <property type="entry name" value="MiaB/RimO family radical SAM methylthiotransferase"/>
    <property type="match status" value="1"/>
</dbReference>
<dbReference type="PANTHER" id="PTHR43837">
    <property type="entry name" value="RIBOSOMAL PROTEIN S12 METHYLTHIOTRANSFERASE RIMO"/>
    <property type="match status" value="1"/>
</dbReference>
<dbReference type="PANTHER" id="PTHR43837:SF1">
    <property type="entry name" value="RIBOSOMAL PROTEIN US12 METHYLTHIOTRANSFERASE RIMO"/>
    <property type="match status" value="1"/>
</dbReference>
<dbReference type="Pfam" id="PF04055">
    <property type="entry name" value="Radical_SAM"/>
    <property type="match status" value="1"/>
</dbReference>
<dbReference type="Pfam" id="PF18693">
    <property type="entry name" value="TRAM_2"/>
    <property type="match status" value="1"/>
</dbReference>
<dbReference type="Pfam" id="PF00919">
    <property type="entry name" value="UPF0004"/>
    <property type="match status" value="1"/>
</dbReference>
<dbReference type="SFLD" id="SFLDG01082">
    <property type="entry name" value="B12-binding_domain_containing"/>
    <property type="match status" value="1"/>
</dbReference>
<dbReference type="SFLD" id="SFLDG01061">
    <property type="entry name" value="methylthiotransferase"/>
    <property type="match status" value="1"/>
</dbReference>
<dbReference type="SFLD" id="SFLDF00274">
    <property type="entry name" value="ribosomal_protein_S12_methylth"/>
    <property type="match status" value="1"/>
</dbReference>
<dbReference type="SMART" id="SM00729">
    <property type="entry name" value="Elp3"/>
    <property type="match status" value="1"/>
</dbReference>
<dbReference type="SUPFAM" id="SSF102114">
    <property type="entry name" value="Radical SAM enzymes"/>
    <property type="match status" value="1"/>
</dbReference>
<dbReference type="PROSITE" id="PS51449">
    <property type="entry name" value="MTTASE_N"/>
    <property type="match status" value="1"/>
</dbReference>
<dbReference type="PROSITE" id="PS01278">
    <property type="entry name" value="MTTASE_RADICAL"/>
    <property type="match status" value="1"/>
</dbReference>
<dbReference type="PROSITE" id="PS51918">
    <property type="entry name" value="RADICAL_SAM"/>
    <property type="match status" value="1"/>
</dbReference>
<dbReference type="PROSITE" id="PS50926">
    <property type="entry name" value="TRAM"/>
    <property type="match status" value="1"/>
</dbReference>